<reference key="1">
    <citation type="submission" date="2008-12" db="EMBL/GenBank/DDBJ databases">
        <title>Complete sequence of Chloroflexus aggregans DSM 9485.</title>
        <authorList>
            <consortium name="US DOE Joint Genome Institute"/>
            <person name="Lucas S."/>
            <person name="Copeland A."/>
            <person name="Lapidus A."/>
            <person name="Glavina del Rio T."/>
            <person name="Dalin E."/>
            <person name="Tice H."/>
            <person name="Pitluck S."/>
            <person name="Foster B."/>
            <person name="Larimer F."/>
            <person name="Land M."/>
            <person name="Hauser L."/>
            <person name="Kyrpides N."/>
            <person name="Mikhailova N."/>
            <person name="Bryant D.A."/>
            <person name="Richardson P."/>
        </authorList>
    </citation>
    <scope>NUCLEOTIDE SEQUENCE [LARGE SCALE GENOMIC DNA]</scope>
    <source>
        <strain>MD-66 / DSM 9485</strain>
    </source>
</reference>
<feature type="chain" id="PRO_1000122907" description="Phosphoribosylaminoimidazole-succinocarboxamide synthase">
    <location>
        <begin position="1"/>
        <end position="250"/>
    </location>
</feature>
<keyword id="KW-0067">ATP-binding</keyword>
<keyword id="KW-0436">Ligase</keyword>
<keyword id="KW-0547">Nucleotide-binding</keyword>
<keyword id="KW-0658">Purine biosynthesis</keyword>
<comment type="catalytic activity">
    <reaction evidence="1">
        <text>5-amino-1-(5-phospho-D-ribosyl)imidazole-4-carboxylate + L-aspartate + ATP = (2S)-2-[5-amino-1-(5-phospho-beta-D-ribosyl)imidazole-4-carboxamido]succinate + ADP + phosphate + 2 H(+)</text>
        <dbReference type="Rhea" id="RHEA:22628"/>
        <dbReference type="ChEBI" id="CHEBI:15378"/>
        <dbReference type="ChEBI" id="CHEBI:29991"/>
        <dbReference type="ChEBI" id="CHEBI:30616"/>
        <dbReference type="ChEBI" id="CHEBI:43474"/>
        <dbReference type="ChEBI" id="CHEBI:58443"/>
        <dbReference type="ChEBI" id="CHEBI:77657"/>
        <dbReference type="ChEBI" id="CHEBI:456216"/>
        <dbReference type="EC" id="6.3.2.6"/>
    </reaction>
</comment>
<comment type="pathway">
    <text evidence="1">Purine metabolism; IMP biosynthesis via de novo pathway; 5-amino-1-(5-phospho-D-ribosyl)imidazole-4-carboxamide from 5-amino-1-(5-phospho-D-ribosyl)imidazole-4-carboxylate: step 1/2.</text>
</comment>
<comment type="similarity">
    <text evidence="1">Belongs to the SAICAR synthetase family.</text>
</comment>
<sequence>MELGHVLSEGKTKIVYAHPTDPDLAILFHKDGITAGDGARRHVIAGKGALAGQTTANVFRFLNRAGIATHFIEAPEPKLTVVRRCVMIPLEVVMRRLPAGSYLRRYPEAAGQRFDPPLVEFFLKDDARHDPQITPDEIVAQGIATPAEVEQMTMTGQQVFTTLEAAWAKLDVTLVDLKIEFGRAGDGSLLVADVIDNDSWRIWPGGDPNRMLDKQVYRNAQVVDEDVLADVYARYAQVAELTGRWDAVTK</sequence>
<accession>B8GCM2</accession>
<protein>
    <recommendedName>
        <fullName evidence="1">Phosphoribosylaminoimidazole-succinocarboxamide synthase</fullName>
        <ecNumber evidence="1">6.3.2.6</ecNumber>
    </recommendedName>
    <alternativeName>
        <fullName evidence="1">SAICAR synthetase</fullName>
    </alternativeName>
</protein>
<gene>
    <name evidence="1" type="primary">purC</name>
    <name type="ordered locus">Cagg_2183</name>
</gene>
<proteinExistence type="inferred from homology"/>
<name>PUR7_CHLAD</name>
<evidence type="ECO:0000255" key="1">
    <source>
        <dbReference type="HAMAP-Rule" id="MF_00137"/>
    </source>
</evidence>
<organism>
    <name type="scientific">Chloroflexus aggregans (strain MD-66 / DSM 9485)</name>
    <dbReference type="NCBI Taxonomy" id="326427"/>
    <lineage>
        <taxon>Bacteria</taxon>
        <taxon>Bacillati</taxon>
        <taxon>Chloroflexota</taxon>
        <taxon>Chloroflexia</taxon>
        <taxon>Chloroflexales</taxon>
        <taxon>Chloroflexineae</taxon>
        <taxon>Chloroflexaceae</taxon>
        <taxon>Chloroflexus</taxon>
    </lineage>
</organism>
<dbReference type="EC" id="6.3.2.6" evidence="1"/>
<dbReference type="EMBL" id="CP001337">
    <property type="protein sequence ID" value="ACL25066.1"/>
    <property type="molecule type" value="Genomic_DNA"/>
</dbReference>
<dbReference type="RefSeq" id="WP_015940924.1">
    <property type="nucleotide sequence ID" value="NC_011831.1"/>
</dbReference>
<dbReference type="SMR" id="B8GCM2"/>
<dbReference type="STRING" id="326427.Cagg_2183"/>
<dbReference type="KEGG" id="cag:Cagg_2183"/>
<dbReference type="eggNOG" id="COG0152">
    <property type="taxonomic scope" value="Bacteria"/>
</dbReference>
<dbReference type="HOGENOM" id="CLU_061495_1_1_0"/>
<dbReference type="OrthoDB" id="9801549at2"/>
<dbReference type="UniPathway" id="UPA00074">
    <property type="reaction ID" value="UER00131"/>
</dbReference>
<dbReference type="Proteomes" id="UP000002508">
    <property type="component" value="Chromosome"/>
</dbReference>
<dbReference type="GO" id="GO:0005524">
    <property type="term" value="F:ATP binding"/>
    <property type="evidence" value="ECO:0007669"/>
    <property type="project" value="UniProtKB-KW"/>
</dbReference>
<dbReference type="GO" id="GO:0004639">
    <property type="term" value="F:phosphoribosylaminoimidazolesuccinocarboxamide synthase activity"/>
    <property type="evidence" value="ECO:0007669"/>
    <property type="project" value="UniProtKB-UniRule"/>
</dbReference>
<dbReference type="GO" id="GO:0006189">
    <property type="term" value="P:'de novo' IMP biosynthetic process"/>
    <property type="evidence" value="ECO:0007669"/>
    <property type="project" value="UniProtKB-UniRule"/>
</dbReference>
<dbReference type="CDD" id="cd01416">
    <property type="entry name" value="SAICAR_synt_Ade5"/>
    <property type="match status" value="1"/>
</dbReference>
<dbReference type="FunFam" id="3.30.200.20:FF:000865">
    <property type="entry name" value="Phosphoribosylaminoimidazole-succinocarboxamide synthase"/>
    <property type="match status" value="1"/>
</dbReference>
<dbReference type="FunFam" id="3.30.470.20:FF:000020">
    <property type="entry name" value="Probable multifunctional protein ADE2"/>
    <property type="match status" value="1"/>
</dbReference>
<dbReference type="Gene3D" id="3.30.470.20">
    <property type="entry name" value="ATP-grasp fold, B domain"/>
    <property type="match status" value="1"/>
</dbReference>
<dbReference type="Gene3D" id="3.30.200.20">
    <property type="entry name" value="Phosphorylase Kinase, domain 1"/>
    <property type="match status" value="1"/>
</dbReference>
<dbReference type="HAMAP" id="MF_00137">
    <property type="entry name" value="SAICAR_synth"/>
    <property type="match status" value="1"/>
</dbReference>
<dbReference type="InterPro" id="IPR028923">
    <property type="entry name" value="SAICAR_synt/ADE2_N"/>
</dbReference>
<dbReference type="InterPro" id="IPR050089">
    <property type="entry name" value="SAICAR_synthetase"/>
</dbReference>
<dbReference type="InterPro" id="IPR018236">
    <property type="entry name" value="SAICAR_synthetase_CS"/>
</dbReference>
<dbReference type="PANTHER" id="PTHR43599">
    <property type="entry name" value="MULTIFUNCTIONAL PROTEIN ADE2"/>
    <property type="match status" value="1"/>
</dbReference>
<dbReference type="PANTHER" id="PTHR43599:SF3">
    <property type="entry name" value="SI:DKEY-6E2.2"/>
    <property type="match status" value="1"/>
</dbReference>
<dbReference type="Pfam" id="PF01259">
    <property type="entry name" value="SAICAR_synt"/>
    <property type="match status" value="1"/>
</dbReference>
<dbReference type="SUPFAM" id="SSF56104">
    <property type="entry name" value="SAICAR synthase-like"/>
    <property type="match status" value="1"/>
</dbReference>
<dbReference type="PROSITE" id="PS01058">
    <property type="entry name" value="SAICAR_SYNTHETASE_2"/>
    <property type="match status" value="1"/>
</dbReference>